<keyword id="KW-0938">Abscisic acid signaling pathway</keyword>
<keyword id="KW-0007">Acetylation</keyword>
<keyword id="KW-0025">Alternative splicing</keyword>
<keyword id="KW-0050">Antiport</keyword>
<keyword id="KW-0150">Chloroplast</keyword>
<keyword id="KW-0175">Coiled coil</keyword>
<keyword id="KW-0406">Ion transport</keyword>
<keyword id="KW-0472">Membrane</keyword>
<keyword id="KW-0934">Plastid</keyword>
<keyword id="KW-1001">Plastid inner membrane</keyword>
<keyword id="KW-0630">Potassium</keyword>
<keyword id="KW-0633">Potassium transport</keyword>
<keyword id="KW-1185">Reference proteome</keyword>
<keyword id="KW-0809">Transit peptide</keyword>
<keyword id="KW-0812">Transmembrane</keyword>
<keyword id="KW-1133">Transmembrane helix</keyword>
<keyword id="KW-0813">Transport</keyword>
<gene>
    <name evidence="18 19" type="primary">KEA2</name>
    <name evidence="22" type="ordered locus">At4g00630</name>
    <name evidence="23" type="ORF">F6N23.14</name>
    <name evidence="24" type="ORF">F6N23.15</name>
</gene>
<dbReference type="EMBL" id="AF058919">
    <property type="protein sequence ID" value="AAC13619.1"/>
    <property type="status" value="ALT_SEQ"/>
    <property type="molecule type" value="Genomic_DNA"/>
</dbReference>
<dbReference type="EMBL" id="AF058919">
    <property type="protein sequence ID" value="AAC13638.1"/>
    <property type="status" value="ALT_SEQ"/>
    <property type="molecule type" value="Genomic_DNA"/>
</dbReference>
<dbReference type="EMBL" id="AL161472">
    <property type="protein sequence ID" value="CAB80872.1"/>
    <property type="status" value="ALT_SEQ"/>
    <property type="molecule type" value="Genomic_DNA"/>
</dbReference>
<dbReference type="EMBL" id="AL161472">
    <property type="protein sequence ID" value="CAB80873.1"/>
    <property type="status" value="ALT_SEQ"/>
    <property type="molecule type" value="Genomic_DNA"/>
</dbReference>
<dbReference type="EMBL" id="CP002687">
    <property type="protein sequence ID" value="AEE81911.1"/>
    <property type="molecule type" value="Genomic_DNA"/>
</dbReference>
<dbReference type="EMBL" id="BX839410">
    <property type="status" value="NOT_ANNOTATED_CDS"/>
    <property type="molecule type" value="mRNA"/>
</dbReference>
<dbReference type="PIR" id="T01227">
    <property type="entry name" value="T01227"/>
</dbReference>
<dbReference type="PIR" id="T01228">
    <property type="entry name" value="T01228"/>
</dbReference>
<dbReference type="RefSeq" id="NP_191972.6">
    <molecule id="O65272-1"/>
    <property type="nucleotide sequence ID" value="NM_116288.7"/>
</dbReference>
<dbReference type="SMR" id="O65272"/>
<dbReference type="FunCoup" id="O65272">
    <property type="interactions" value="406"/>
</dbReference>
<dbReference type="STRING" id="3702.O65272"/>
<dbReference type="TCDB" id="2.A.37.1.7">
    <property type="family name" value="the monovalent cation:proton antiporter-2 (cpa2) family"/>
</dbReference>
<dbReference type="iPTMnet" id="O65272"/>
<dbReference type="PaxDb" id="3702-AT4G00630.2"/>
<dbReference type="ProteomicsDB" id="237059">
    <molecule id="O65272-1"/>
</dbReference>
<dbReference type="EnsemblPlants" id="AT4G00630.1">
    <molecule id="O65272-1"/>
    <property type="protein sequence ID" value="AT4G00630.1"/>
    <property type="gene ID" value="AT4G00630"/>
</dbReference>
<dbReference type="GeneID" id="825834"/>
<dbReference type="Gramene" id="AT4G00630.1">
    <molecule id="O65272-1"/>
    <property type="protein sequence ID" value="AT4G00630.1"/>
    <property type="gene ID" value="AT4G00630"/>
</dbReference>
<dbReference type="KEGG" id="ath:AT4G00630"/>
<dbReference type="Araport" id="AT4G00630"/>
<dbReference type="TAIR" id="AT4G00630">
    <property type="gene designation" value="KEA2"/>
</dbReference>
<dbReference type="eggNOG" id="KOG1650">
    <property type="taxonomic scope" value="Eukaryota"/>
</dbReference>
<dbReference type="InParanoid" id="O65272"/>
<dbReference type="OMA" id="ITCQAND"/>
<dbReference type="PRO" id="PR:O65272"/>
<dbReference type="Proteomes" id="UP000006548">
    <property type="component" value="Chromosome 4"/>
</dbReference>
<dbReference type="ExpressionAtlas" id="O65272">
    <property type="expression patterns" value="baseline and differential"/>
</dbReference>
<dbReference type="GO" id="GO:0009706">
    <property type="term" value="C:chloroplast inner membrane"/>
    <property type="evidence" value="ECO:0007669"/>
    <property type="project" value="UniProtKB-SubCell"/>
</dbReference>
<dbReference type="GO" id="GO:0015079">
    <property type="term" value="F:potassium ion transmembrane transporter activity"/>
    <property type="evidence" value="ECO:0000314"/>
    <property type="project" value="UniProtKB"/>
</dbReference>
<dbReference type="GO" id="GO:0015386">
    <property type="term" value="F:potassium:proton antiporter activity"/>
    <property type="evidence" value="ECO:0000314"/>
    <property type="project" value="UniProtKB"/>
</dbReference>
<dbReference type="GO" id="GO:0015078">
    <property type="term" value="F:proton transmembrane transporter activity"/>
    <property type="evidence" value="ECO:0000314"/>
    <property type="project" value="UniProtKB"/>
</dbReference>
<dbReference type="GO" id="GO:0009738">
    <property type="term" value="P:abscisic acid-activated signaling pathway"/>
    <property type="evidence" value="ECO:0007669"/>
    <property type="project" value="UniProtKB-KW"/>
</dbReference>
<dbReference type="GO" id="GO:0019722">
    <property type="term" value="P:calcium-mediated signaling"/>
    <property type="evidence" value="ECO:0000315"/>
    <property type="project" value="UniProtKB"/>
</dbReference>
<dbReference type="GO" id="GO:0140899">
    <property type="term" value="P:plastid gene expression"/>
    <property type="evidence" value="ECO:0000315"/>
    <property type="project" value="UniProtKB"/>
</dbReference>
<dbReference type="GO" id="GO:0042794">
    <property type="term" value="P:plastid rRNA transcription"/>
    <property type="evidence" value="ECO:0000315"/>
    <property type="project" value="UniProtKB"/>
</dbReference>
<dbReference type="GO" id="GO:0006813">
    <property type="term" value="P:potassium ion transport"/>
    <property type="evidence" value="ECO:0000314"/>
    <property type="project" value="UniProtKB"/>
</dbReference>
<dbReference type="GO" id="GO:0080022">
    <property type="term" value="P:primary root development"/>
    <property type="evidence" value="ECO:0000315"/>
    <property type="project" value="UniProtKB"/>
</dbReference>
<dbReference type="GO" id="GO:2001057">
    <property type="term" value="P:reactive nitrogen species metabolic process"/>
    <property type="evidence" value="ECO:0000315"/>
    <property type="project" value="UniProtKB"/>
</dbReference>
<dbReference type="GO" id="GO:1900069">
    <property type="term" value="P:regulation of cellular hyperosmotic salinity response"/>
    <property type="evidence" value="ECO:0000315"/>
    <property type="project" value="UniProtKB"/>
</dbReference>
<dbReference type="GO" id="GO:0006885">
    <property type="term" value="P:regulation of pH"/>
    <property type="evidence" value="ECO:0000315"/>
    <property type="project" value="UniProtKB"/>
</dbReference>
<dbReference type="GO" id="GO:0010109">
    <property type="term" value="P:regulation of photosynthesis"/>
    <property type="evidence" value="ECO:0000315"/>
    <property type="project" value="UniProtKB"/>
</dbReference>
<dbReference type="GO" id="GO:2000377">
    <property type="term" value="P:regulation of reactive oxygen species metabolic process"/>
    <property type="evidence" value="ECO:0000315"/>
    <property type="project" value="UniProtKB"/>
</dbReference>
<dbReference type="GO" id="GO:2000070">
    <property type="term" value="P:regulation of response to water deprivation"/>
    <property type="evidence" value="ECO:0000315"/>
    <property type="project" value="UniProtKB"/>
</dbReference>
<dbReference type="GO" id="GO:1900140">
    <property type="term" value="P:regulation of seedling development"/>
    <property type="evidence" value="ECO:0000315"/>
    <property type="project" value="UniProtKB"/>
</dbReference>
<dbReference type="GO" id="GO:0009737">
    <property type="term" value="P:response to abscisic acid"/>
    <property type="evidence" value="ECO:0000315"/>
    <property type="project" value="UniProtKB"/>
</dbReference>
<dbReference type="GO" id="GO:0009646">
    <property type="term" value="P:response to absence of light"/>
    <property type="evidence" value="ECO:0000315"/>
    <property type="project" value="UniProtKB"/>
</dbReference>
<dbReference type="GO" id="GO:0009744">
    <property type="term" value="P:response to sucrose"/>
    <property type="evidence" value="ECO:0000315"/>
    <property type="project" value="UniProtKB"/>
</dbReference>
<dbReference type="FunFam" id="1.20.1530.20:FF:000007">
    <property type="entry name" value="K(+) efflux antiporter 2 chloroplastic"/>
    <property type="match status" value="1"/>
</dbReference>
<dbReference type="FunFam" id="3.40.50.720:FF:000134">
    <property type="entry name" value="K(+) efflux antiporter 2 chloroplastic"/>
    <property type="match status" value="1"/>
</dbReference>
<dbReference type="Gene3D" id="1.20.1530.20">
    <property type="match status" value="1"/>
</dbReference>
<dbReference type="Gene3D" id="3.40.50.720">
    <property type="entry name" value="NAD(P)-binding Rossmann-like Domain"/>
    <property type="match status" value="1"/>
</dbReference>
<dbReference type="InterPro" id="IPR006153">
    <property type="entry name" value="Cation/H_exchanger_TM"/>
</dbReference>
<dbReference type="InterPro" id="IPR004771">
    <property type="entry name" value="K/H_exchanger"/>
</dbReference>
<dbReference type="InterPro" id="IPR038770">
    <property type="entry name" value="Na+/solute_symporter_sf"/>
</dbReference>
<dbReference type="InterPro" id="IPR036291">
    <property type="entry name" value="NAD(P)-bd_dom_sf"/>
</dbReference>
<dbReference type="InterPro" id="IPR003148">
    <property type="entry name" value="RCK_N"/>
</dbReference>
<dbReference type="NCBIfam" id="TIGR00932">
    <property type="entry name" value="2a37"/>
    <property type="match status" value="1"/>
</dbReference>
<dbReference type="PANTHER" id="PTHR46157:SF2">
    <property type="entry name" value="K(+) EFFLUX ANTIPORTER 1, CHLOROPLASTIC-RELATED"/>
    <property type="match status" value="1"/>
</dbReference>
<dbReference type="PANTHER" id="PTHR46157">
    <property type="entry name" value="K(+) EFFLUX ANTIPORTER 3, CHLOROPLASTIC"/>
    <property type="match status" value="1"/>
</dbReference>
<dbReference type="Pfam" id="PF00999">
    <property type="entry name" value="Na_H_Exchanger"/>
    <property type="match status" value="1"/>
</dbReference>
<dbReference type="Pfam" id="PF02254">
    <property type="entry name" value="TrkA_N"/>
    <property type="match status" value="1"/>
</dbReference>
<dbReference type="SUPFAM" id="SSF51735">
    <property type="entry name" value="NAD(P)-binding Rossmann-fold domains"/>
    <property type="match status" value="1"/>
</dbReference>
<dbReference type="PROSITE" id="PS51201">
    <property type="entry name" value="RCK_N"/>
    <property type="match status" value="1"/>
</dbReference>
<reference key="1">
    <citation type="journal article" date="1999" name="Nature">
        <title>Sequence and analysis of chromosome 4 of the plant Arabidopsis thaliana.</title>
        <authorList>
            <person name="Mayer K.F.X."/>
            <person name="Schueller C."/>
            <person name="Wambutt R."/>
            <person name="Murphy G."/>
            <person name="Volckaert G."/>
            <person name="Pohl T."/>
            <person name="Duesterhoeft A."/>
            <person name="Stiekema W."/>
            <person name="Entian K.-D."/>
            <person name="Terryn N."/>
            <person name="Harris B."/>
            <person name="Ansorge W."/>
            <person name="Brandt P."/>
            <person name="Grivell L.A."/>
            <person name="Rieger M."/>
            <person name="Weichselgartner M."/>
            <person name="de Simone V."/>
            <person name="Obermaier B."/>
            <person name="Mache R."/>
            <person name="Mueller M."/>
            <person name="Kreis M."/>
            <person name="Delseny M."/>
            <person name="Puigdomenech P."/>
            <person name="Watson M."/>
            <person name="Schmidtheini T."/>
            <person name="Reichert B."/>
            <person name="Portetelle D."/>
            <person name="Perez-Alonso M."/>
            <person name="Boutry M."/>
            <person name="Bancroft I."/>
            <person name="Vos P."/>
            <person name="Hoheisel J."/>
            <person name="Zimmermann W."/>
            <person name="Wedler H."/>
            <person name="Ridley P."/>
            <person name="Langham S.-A."/>
            <person name="McCullagh B."/>
            <person name="Bilham L."/>
            <person name="Robben J."/>
            <person name="van der Schueren J."/>
            <person name="Grymonprez B."/>
            <person name="Chuang Y.-J."/>
            <person name="Vandenbussche F."/>
            <person name="Braeken M."/>
            <person name="Weltjens I."/>
            <person name="Voet M."/>
            <person name="Bastiaens I."/>
            <person name="Aert R."/>
            <person name="Defoor E."/>
            <person name="Weitzenegger T."/>
            <person name="Bothe G."/>
            <person name="Ramsperger U."/>
            <person name="Hilbert H."/>
            <person name="Braun M."/>
            <person name="Holzer E."/>
            <person name="Brandt A."/>
            <person name="Peters S."/>
            <person name="van Staveren M."/>
            <person name="Dirkse W."/>
            <person name="Mooijman P."/>
            <person name="Klein Lankhorst R."/>
            <person name="Rose M."/>
            <person name="Hauf J."/>
            <person name="Koetter P."/>
            <person name="Berneiser S."/>
            <person name="Hempel S."/>
            <person name="Feldpausch M."/>
            <person name="Lamberth S."/>
            <person name="Van den Daele H."/>
            <person name="De Keyser A."/>
            <person name="Buysshaert C."/>
            <person name="Gielen J."/>
            <person name="Villarroel R."/>
            <person name="De Clercq R."/>
            <person name="van Montagu M."/>
            <person name="Rogers J."/>
            <person name="Cronin A."/>
            <person name="Quail M.A."/>
            <person name="Bray-Allen S."/>
            <person name="Clark L."/>
            <person name="Doggett J."/>
            <person name="Hall S."/>
            <person name="Kay M."/>
            <person name="Lennard N."/>
            <person name="McLay K."/>
            <person name="Mayes R."/>
            <person name="Pettett A."/>
            <person name="Rajandream M.A."/>
            <person name="Lyne M."/>
            <person name="Benes V."/>
            <person name="Rechmann S."/>
            <person name="Borkova D."/>
            <person name="Bloecker H."/>
            <person name="Scharfe M."/>
            <person name="Grimm M."/>
            <person name="Loehnert T.-H."/>
            <person name="Dose S."/>
            <person name="de Haan M."/>
            <person name="Maarse A.C."/>
            <person name="Schaefer M."/>
            <person name="Mueller-Auer S."/>
            <person name="Gabel C."/>
            <person name="Fuchs M."/>
            <person name="Fartmann B."/>
            <person name="Granderath K."/>
            <person name="Dauner D."/>
            <person name="Herzl A."/>
            <person name="Neumann S."/>
            <person name="Argiriou A."/>
            <person name="Vitale D."/>
            <person name="Liguori R."/>
            <person name="Piravandi E."/>
            <person name="Massenet O."/>
            <person name="Quigley F."/>
            <person name="Clabauld G."/>
            <person name="Muendlein A."/>
            <person name="Felber R."/>
            <person name="Schnabl S."/>
            <person name="Hiller R."/>
            <person name="Schmidt W."/>
            <person name="Lecharny A."/>
            <person name="Aubourg S."/>
            <person name="Chefdor F."/>
            <person name="Cooke R."/>
            <person name="Berger C."/>
            <person name="Monfort A."/>
            <person name="Casacuberta E."/>
            <person name="Gibbons T."/>
            <person name="Weber N."/>
            <person name="Vandenbol M."/>
            <person name="Bargues M."/>
            <person name="Terol J."/>
            <person name="Torres A."/>
            <person name="Perez-Perez A."/>
            <person name="Purnelle B."/>
            <person name="Bent E."/>
            <person name="Johnson S."/>
            <person name="Tacon D."/>
            <person name="Jesse T."/>
            <person name="Heijnen L."/>
            <person name="Schwarz S."/>
            <person name="Scholler P."/>
            <person name="Heber S."/>
            <person name="Francs P."/>
            <person name="Bielke C."/>
            <person name="Frishman D."/>
            <person name="Haase D."/>
            <person name="Lemcke K."/>
            <person name="Mewes H.-W."/>
            <person name="Stocker S."/>
            <person name="Zaccaria P."/>
            <person name="Bevan M."/>
            <person name="Wilson R.K."/>
            <person name="de la Bastide M."/>
            <person name="Habermann K."/>
            <person name="Parnell L."/>
            <person name="Dedhia N."/>
            <person name="Gnoj L."/>
            <person name="Schutz K."/>
            <person name="Huang E."/>
            <person name="Spiegel L."/>
            <person name="Sekhon M."/>
            <person name="Murray J."/>
            <person name="Sheet P."/>
            <person name="Cordes M."/>
            <person name="Abu-Threideh J."/>
            <person name="Stoneking T."/>
            <person name="Kalicki J."/>
            <person name="Graves T."/>
            <person name="Harmon G."/>
            <person name="Edwards J."/>
            <person name="Latreille P."/>
            <person name="Courtney L."/>
            <person name="Cloud J."/>
            <person name="Abbott A."/>
            <person name="Scott K."/>
            <person name="Johnson D."/>
            <person name="Minx P."/>
            <person name="Bentley D."/>
            <person name="Fulton B."/>
            <person name="Miller N."/>
            <person name="Greco T."/>
            <person name="Kemp K."/>
            <person name="Kramer J."/>
            <person name="Fulton L."/>
            <person name="Mardis E."/>
            <person name="Dante M."/>
            <person name="Pepin K."/>
            <person name="Hillier L.W."/>
            <person name="Nelson J."/>
            <person name="Spieth J."/>
            <person name="Ryan E."/>
            <person name="Andrews S."/>
            <person name="Geisel C."/>
            <person name="Layman D."/>
            <person name="Du H."/>
            <person name="Ali J."/>
            <person name="Berghoff A."/>
            <person name="Jones K."/>
            <person name="Drone K."/>
            <person name="Cotton M."/>
            <person name="Joshu C."/>
            <person name="Antonoiu B."/>
            <person name="Zidanic M."/>
            <person name="Strong C."/>
            <person name="Sun H."/>
            <person name="Lamar B."/>
            <person name="Yordan C."/>
            <person name="Ma P."/>
            <person name="Zhong J."/>
            <person name="Preston R."/>
            <person name="Vil D."/>
            <person name="Shekher M."/>
            <person name="Matero A."/>
            <person name="Shah R."/>
            <person name="Swaby I.K."/>
            <person name="O'Shaughnessy A."/>
            <person name="Rodriguez M."/>
            <person name="Hoffman J."/>
            <person name="Till S."/>
            <person name="Granat S."/>
            <person name="Shohdy N."/>
            <person name="Hasegawa A."/>
            <person name="Hameed A."/>
            <person name="Lodhi M."/>
            <person name="Johnson A."/>
            <person name="Chen E."/>
            <person name="Marra M.A."/>
            <person name="Martienssen R."/>
            <person name="McCombie W.R."/>
        </authorList>
    </citation>
    <scope>NUCLEOTIDE SEQUENCE [LARGE SCALE GENOMIC DNA]</scope>
    <source>
        <strain>cv. Columbia</strain>
    </source>
</reference>
<reference key="2">
    <citation type="journal article" date="2017" name="Plant J.">
        <title>Araport11: a complete reannotation of the Arabidopsis thaliana reference genome.</title>
        <authorList>
            <person name="Cheng C.Y."/>
            <person name="Krishnakumar V."/>
            <person name="Chan A.P."/>
            <person name="Thibaud-Nissen F."/>
            <person name="Schobel S."/>
            <person name="Town C.D."/>
        </authorList>
    </citation>
    <scope>GENOME REANNOTATION</scope>
    <source>
        <strain>cv. Columbia</strain>
    </source>
</reference>
<reference key="3">
    <citation type="journal article" date="2004" name="Genome Res.">
        <title>Whole genome sequence comparisons and 'full-length' cDNA sequences: a combined approach to evaluate and improve Arabidopsis genome annotation.</title>
        <authorList>
            <person name="Castelli V."/>
            <person name="Aury J.-M."/>
            <person name="Jaillon O."/>
            <person name="Wincker P."/>
            <person name="Clepet C."/>
            <person name="Menard M."/>
            <person name="Cruaud C."/>
            <person name="Quetier F."/>
            <person name="Scarpelli C."/>
            <person name="Schaechter V."/>
            <person name="Temple G."/>
            <person name="Caboche M."/>
            <person name="Weissenbach J."/>
            <person name="Salanoubat M."/>
        </authorList>
    </citation>
    <scope>NUCLEOTIDE SEQUENCE [LARGE SCALE MRNA] OF 638-920</scope>
    <source>
        <strain>cv. Columbia</strain>
    </source>
</reference>
<reference key="4">
    <citation type="journal article" date="2001" name="Plant Physiol.">
        <title>Phylogenetic relationships within cation transporter families of Arabidopsis.</title>
        <authorList>
            <person name="Maeser P."/>
            <person name="Thomine S."/>
            <person name="Schroeder J.I."/>
            <person name="Ward J.M."/>
            <person name="Hirschi K."/>
            <person name="Sze H."/>
            <person name="Talke I.N."/>
            <person name="Amtmann A."/>
            <person name="Maathuis F.J.M."/>
            <person name="Sanders D."/>
            <person name="Harper J.F."/>
            <person name="Tchieu J."/>
            <person name="Gribskov M."/>
            <person name="Persans M.W."/>
            <person name="Salt D.E."/>
            <person name="Kim S.A."/>
            <person name="Guerinot M.L."/>
        </authorList>
    </citation>
    <scope>GENE FAMILY</scope>
    <scope>NOMENCLATURE</scope>
</reference>
<reference key="5">
    <citation type="journal article" date="2008" name="PLoS ONE">
        <title>Sorting signals, N-terminal modifications and abundance of the chloroplast proteome.</title>
        <authorList>
            <person name="Zybailov B."/>
            <person name="Rutschow H."/>
            <person name="Friso G."/>
            <person name="Rudella A."/>
            <person name="Emanuelsson O."/>
            <person name="Sun Q."/>
            <person name="van Wijk K.J."/>
        </authorList>
    </citation>
    <scope>IDENTIFICATION BY MASS SPECTROMETRY</scope>
    <scope>SUBCELLULAR LOCATION [LARGE SCALE ANALYSIS]</scope>
</reference>
<reference key="6">
    <citation type="journal article" date="2009" name="Plant Physiol.">
        <title>Large-scale Arabidopsis phosphoproteome profiling reveals novel chloroplast kinase substrates and phosphorylation networks.</title>
        <authorList>
            <person name="Reiland S."/>
            <person name="Messerli G."/>
            <person name="Baerenfaller K."/>
            <person name="Gerrits B."/>
            <person name="Endler A."/>
            <person name="Grossmann J."/>
            <person name="Gruissem W."/>
            <person name="Baginsky S."/>
        </authorList>
    </citation>
    <scope>IDENTIFICATION BY MASS SPECTROMETRY [LARGE SCALE ANALYSIS]</scope>
</reference>
<reference key="7">
    <citation type="journal article" date="2012" name="Biochim. Biophys. Acta">
        <title>Arabidopsis KEA2, a homolog of bacterial KefC, encodes a K(+)/H(+) antiporter with a chloroplast transit peptide.</title>
        <authorList>
            <person name="Aranda-Sicilia M.N."/>
            <person name="Cagnac O."/>
            <person name="Chanroj S."/>
            <person name="Sze H."/>
            <person name="Rodriguez-Rosales M.P."/>
            <person name="Venema K."/>
        </authorList>
    </citation>
    <scope>FUNCTION</scope>
    <scope>TISSUE SPECIFICITY</scope>
    <scope>SUBCELLULAR LOCATION</scope>
    <scope>MUTAGENESIS OF ASP-721 AND GLU-833</scope>
</reference>
<reference key="8">
    <citation type="journal article" date="2013" name="PLoS ONE">
        <title>A novel AtKEA gene family, homolog of bacterial K+/H+ antiporters, plays potential roles in K+ homeostasis and osmotic adjustment in Arabidopsis.</title>
        <authorList>
            <person name="Zheng S."/>
            <person name="Pan T."/>
            <person name="Fan L."/>
            <person name="Qiu Q.S."/>
        </authorList>
    </citation>
    <scope>FUNCTION</scope>
    <scope>GENE FAMILY</scope>
    <scope>TISSUE SPECIFICITY</scope>
    <scope>INDUCTION</scope>
    <scope>TRANSPORTER ACTIVITY</scope>
    <scope>BIOPHYSICOCHEMICAL PROPERTIES</scope>
    <source>
        <strain>cv. Columbia</strain>
    </source>
</reference>
<reference key="9">
    <citation type="journal article" date="2014" name="Proc. Natl. Acad. Sci. U.S.A.">
        <title>Plastidial transporters KEA1, -2, and -3 are essential for chloroplast osmoregulation, integrity, and pH regulation in Arabidopsis.</title>
        <authorList>
            <person name="Kunz H.H."/>
            <person name="Gierth M."/>
            <person name="Herdean A."/>
            <person name="Satoh-Cruz M."/>
            <person name="Kramer D.M."/>
            <person name="Spetea C."/>
            <person name="Schroeder J.I."/>
        </authorList>
    </citation>
    <scope>DISRUPTION PHENOTYPE</scope>
    <scope>SUBCELLULAR LOCATION</scope>
</reference>
<reference key="10">
    <citation type="journal article" date="2016" name="Plant Physiol.">
        <title>Envelope K+/H+ antiporters AtKEA1 and AtKEA2 function in plastid development.</title>
        <authorList>
            <person name="Aranda-Sicilia M.N."/>
            <person name="Aboukila A."/>
            <person name="Armbruster U."/>
            <person name="Cagnac O."/>
            <person name="Schumann T."/>
            <person name="Kunz H.-H."/>
            <person name="Jahns P."/>
            <person name="Rodriguez-Rosales M.P."/>
            <person name="Sze H."/>
            <person name="Venema K."/>
        </authorList>
    </citation>
    <scope>FUNCTION</scope>
    <scope>DISRUPTION PHENOTYPE</scope>
    <scope>TISSUE SPECIFICITY</scope>
    <scope>SUBCELLULAR LOCATION</scope>
    <source>
        <strain>cv. Columbia</strain>
    </source>
</reference>
<reference key="11">
    <citation type="journal article" date="2016" name="Proc. Natl. Acad. Sci. U.S.A.">
        <title>Rapid hyperosmotic-induced Ca2+ responses in Arabidopsis thaliana exhibit sensory potentiation and involvement of plastidial KEA transporters.</title>
        <authorList>
            <person name="Stephan A.B."/>
            <person name="Kunz H.-H."/>
            <person name="Yang E."/>
            <person name="Schroeder J.I."/>
        </authorList>
    </citation>
    <scope>FUNCTION</scope>
    <scope>DISRUPTION PHENOTYPE</scope>
    <source>
        <strain>cv. Columbia</strain>
    </source>
</reference>
<reference key="12">
    <citation type="journal article" date="2018" name="Plant Cell">
        <title>Chloroplast acetyltransferase NSI is required for state transitions in Arabidopsis thaliana.</title>
        <authorList>
            <person name="Koskela M.M."/>
            <person name="Bruenje A."/>
            <person name="Ivanauskaite A."/>
            <person name="Grabsztunowicz M."/>
            <person name="Lassowskat I."/>
            <person name="Neumann U."/>
            <person name="Dinh T.V."/>
            <person name="Sindlinger J."/>
            <person name="Schwarzer D."/>
            <person name="Wirtz M."/>
            <person name="Tyystjaervi E."/>
            <person name="Finkemeier I."/>
            <person name="Mulo P."/>
        </authorList>
    </citation>
    <scope>ACETYLATION</scope>
    <scope>IDENTIFICATION BY MASS SPECTROMETRY</scope>
    <source>
        <strain>cv. Columbia</strain>
    </source>
</reference>
<reference key="13">
    <citation type="journal article" date="2019" name="Sci. Rep.">
        <title>Evidence for potassium transport activity of Arabidopsis KEA1-KEA6.</title>
        <authorList>
            <person name="Tsujii M."/>
            <person name="Kera K."/>
            <person name="Hamamoto S."/>
            <person name="Kuromori T."/>
            <person name="Shikanai T."/>
            <person name="Uozumi N."/>
        </authorList>
    </citation>
    <scope>FUNCTION</scope>
    <scope>TRANSPORTER ACTIVITY</scope>
    <scope>GENE FAMILY</scope>
    <scope>NOMENCLATURE</scope>
    <source>
        <strain>cv. Columbia</strain>
    </source>
</reference>
<reference key="14">
    <citation type="journal article" date="2020" name="Photosyn. Res.">
        <title>The topology of plastid inner envelope potassium cation efflux antiporter KEA1 provides new insights into its regulatory features.</title>
        <authorList>
            <person name="Boelter B."/>
            <person name="Mitterreiter M.J."/>
            <person name="Schwenkert S."/>
            <person name="Finkemeier I."/>
            <person name="Kunz H.-H."/>
        </authorList>
    </citation>
    <scope>ACETYLATION</scope>
    <scope>TOPOLOGY</scope>
    <source>
        <strain>cv. Columbia</strain>
    </source>
</reference>
<reference key="15">
    <citation type="journal article" date="2021" name="New Phytol.">
        <title>Plastidial transporters KEA1 and KEA2 at the inner envelope membrane adjust stromal pH in the dark.</title>
        <authorList>
            <person name="Aranda Sicilia M.N."/>
            <person name="Sanchez Romero M.E."/>
            <person name="Rodriguez Rosales M.P."/>
            <person name="Venema K."/>
        </authorList>
    </citation>
    <scope>FUNCTION</scope>
    <scope>DISRUPTION PHENOTYPE</scope>
    <scope>CATALYTIC ACTIVITY</scope>
    <scope>ACTIVITY REGULATION</scope>
    <source>
        <strain>cv. Columbia</strain>
    </source>
</reference>
<reference key="16">
    <citation type="journal article" date="2021" name="Plant Cell">
        <title>Loss of inner-envelope K+/H+ exchangers impairs plastid rRNA maturation and gene expression.</title>
        <authorList>
            <person name="DeTar R.A."/>
            <person name="Barahimipour R."/>
            <person name="Manavski N."/>
            <person name="Schwenkert S."/>
            <person name="Hoehner R."/>
            <person name="Boelter B."/>
            <person name="Inaba T."/>
            <person name="Meurer J."/>
            <person name="Zoschke R."/>
            <person name="Kunz H.-H."/>
        </authorList>
    </citation>
    <scope>FUNCTION</scope>
    <scope>DISRUPTION PHENOTYPE</scope>
    <source>
        <strain>cv. Columbia</strain>
    </source>
</reference>
<reference key="17">
    <citation type="journal article" date="2021" name="Plant Physiol. Biochem.">
        <title>Loss of function of the chloroplast membrane K+/H+ antiporters AtKEA1 and AtKEA2 alters the ROS and NO metabolism but promotes drought stress resilience.</title>
        <authorList>
            <person name="Sanchez-McSweeney A."/>
            <person name="Gonzalez-Gordo S."/>
            <person name="Aranda-Sicilia M.N."/>
            <person name="Rodriguez-Rosales M.P."/>
            <person name="Venema K."/>
            <person name="Palma J.M."/>
            <person name="Corpas F.J."/>
        </authorList>
    </citation>
    <scope>FUNCTION</scope>
    <scope>DISRUPTION PHENOTYPE</scope>
    <scope>SUBCELLULAR LOCATION</scope>
    <source>
        <strain>cv. Columbia</strain>
    </source>
</reference>
<reference key="18">
    <citation type="journal article" date="2022" name="Plant Sci.">
        <title>Exogenous sucrose influences KEA1 and KEA2 to regulate abscisic acid-mediated primary root growth in Arabidopsis.</title>
        <authorList>
            <person name="Zheng S."/>
            <person name="Su M."/>
            <person name="Shi Z."/>
            <person name="Gao H."/>
            <person name="Ma C."/>
            <person name="Zhu S."/>
            <person name="Zhang L."/>
            <person name="Wu G."/>
            <person name="Wu W."/>
            <person name="Wang J."/>
            <person name="Zhang J."/>
            <person name="Zhang T."/>
        </authorList>
    </citation>
    <scope>FUNCTION</scope>
    <scope>DISRUPTION PHENOTYPE</scope>
    <scope>TISSUE SPECIFICITY</scope>
    <source>
        <strain>cv. Columbia</strain>
    </source>
</reference>
<name>KEA2_ARATH</name>
<organism>
    <name type="scientific">Arabidopsis thaliana</name>
    <name type="common">Mouse-ear cress</name>
    <dbReference type="NCBI Taxonomy" id="3702"/>
    <lineage>
        <taxon>Eukaryota</taxon>
        <taxon>Viridiplantae</taxon>
        <taxon>Streptophyta</taxon>
        <taxon>Embryophyta</taxon>
        <taxon>Tracheophyta</taxon>
        <taxon>Spermatophyta</taxon>
        <taxon>Magnoliopsida</taxon>
        <taxon>eudicotyledons</taxon>
        <taxon>Gunneridae</taxon>
        <taxon>Pentapetalae</taxon>
        <taxon>rosids</taxon>
        <taxon>malvids</taxon>
        <taxon>Brassicales</taxon>
        <taxon>Brassicaceae</taxon>
        <taxon>Camelineae</taxon>
        <taxon>Arabidopsis</taxon>
    </lineage>
</organism>
<sequence length="1174" mass="126157">MDFASSVQRQSMFHGGADFASYCLPNRMISAKLCPKGLGGTRFWDPMIDSKVRSAIRSKRNVSYRSSLTLNADFNGRFYGHLLPAKPQNVPLGFRLLCQSSDSVGDLVGNDRNLEFAEGSDDREVTFSKEEKDTREQDSAPSLEELRDLLNKATKELEVASLNSTMFEEKAQRISEVAIALKDEAASAWNDVNQTLNVVQEAVDEESVAKEAVQKATMALSLAEARLQVALESLEAEGYNTSEESEVRDGVKDKEEALLSAKADIKECQENLASCEEQLRRLQVKKDELQKEVDRLNEAAERAQISALKAEEDVANIMVLAEQAVAFELEATQRVNDAEIALQRAEKTLFGSQTQETTQGKVLDGKNTIVGEDEVLSEIVDVSHQAERDLVVVGVSSDVGTQSYESDNENGKPTADFAKEAEGEAEKSKNVVLTKKQEVQKDLPRESSSHNGTKTSLKKSSRFFPASFFSSNGDGTATVFESLVESAKQQWPKLILGFTLLGAGVAIYSNGVGRNNQLPQQPNIVSTSAEDVSSSTKPLIRQMQKLPKRIKKLLEMFPQQEVNEEEASLLDVLWLLLASVIFVPLFQKIPGGSPVLGYLAAGILIGPYGLSIIRNVHGTKAIAEFGVVFLLFNIGLELSVERLSSMKKYVFGLGSAQVLVTAAVIGLITHYVAGQAGPAAIVIGNGLALSSTAVVLQVLQERGESTSRHGRATFSVLLFQDLAVVVLLILIPLISPNSSKGGIGFQAIAEALGLAAIKAAVAITGIIAGGRLLLRPIYKQIAENRNAEIFSANTLLVILGTSLLTARAGLSMALGAFLAGLLLAETEFSLQVESDIAPYRGLLLGLFFMTVGMSIDPKLLLANFPLIMGTLGLLLVGKTILVVIIGKLFGISIISAVRVGLLLAPGGEFAFVAFGEAVNQGIMTPQLSSLLFLVVGISMALTPWLAAGGQLIASRFELQDVRSLLPVESETDDLQGHIIICGFGRIGQIIAQLLSERLIPFVALDVSSDRVAIGRSLDLPVYFGDAGSREVLHKIGADRACAAAIALDTPGANYRCVWALSKYFPNVKTFVRAHDVDHGLNLEKAGATAVVPETLEPSLQLAAAVLAQAKLPTSEIATTINEFRSRHLSELAELCEASGSSLGYGFSRSTSKPKPPSPSETSDDNQIIEGTLAI</sequence>
<accession>O65272</accession>
<accession>O65273</accession>
<proteinExistence type="evidence at protein level"/>
<protein>
    <recommendedName>
        <fullName evidence="18">K(+) efflux antiporter 2, chloroplastic</fullName>
        <shortName evidence="18">AtKEA2</shortName>
    </recommendedName>
</protein>
<feature type="transit peptide" description="Chloroplast" evidence="2">
    <location>
        <begin position="1"/>
        <end position="57"/>
    </location>
</feature>
<feature type="chain" id="PRO_0000395098" description="K(+) efflux antiporter 2, chloroplastic">
    <location>
        <begin position="58"/>
        <end position="1174"/>
    </location>
</feature>
<feature type="topological domain" description="Stromal" evidence="21">
    <location>
        <begin position="58"/>
        <end position="565"/>
    </location>
</feature>
<feature type="transmembrane region" description="Helical; Name=1" evidence="2">
    <location>
        <begin position="566"/>
        <end position="586"/>
    </location>
</feature>
<feature type="topological domain" description="Chloroplast intermembrane" evidence="21">
    <location>
        <begin position="587"/>
        <end position="592"/>
    </location>
</feature>
<feature type="transmembrane region" description="Helical; Name=2" evidence="2">
    <location>
        <begin position="593"/>
        <end position="613"/>
    </location>
</feature>
<feature type="topological domain" description="Stromal" evidence="21">
    <location>
        <begin position="614"/>
        <end position="620"/>
    </location>
</feature>
<feature type="transmembrane region" description="Helical; Name=3" evidence="2">
    <location>
        <begin position="621"/>
        <end position="641"/>
    </location>
</feature>
<feature type="topological domain" description="Chloroplast intermembrane" evidence="21">
    <location>
        <begin position="642"/>
        <end position="648"/>
    </location>
</feature>
<feature type="transmembrane region" description="Helical; Name=4" evidence="2">
    <location>
        <begin position="649"/>
        <end position="669"/>
    </location>
</feature>
<feature type="topological domain" description="Stromal" evidence="21">
    <location>
        <begin position="670"/>
        <end position="678"/>
    </location>
</feature>
<feature type="transmembrane region" description="Helical; Name=5" evidence="2">
    <location>
        <begin position="679"/>
        <end position="699"/>
    </location>
</feature>
<feature type="topological domain" description="Chloroplast intermembrane" evidence="21">
    <location>
        <begin position="700"/>
        <end position="713"/>
    </location>
</feature>
<feature type="transmembrane region" description="Helical; Name=6" evidence="2">
    <location>
        <begin position="714"/>
        <end position="734"/>
    </location>
</feature>
<feature type="topological domain" description="Stromal" evidence="21">
    <location>
        <begin position="735"/>
        <end position="746"/>
    </location>
</feature>
<feature type="transmembrane region" description="Helical; Name=7" evidence="2">
    <location>
        <begin position="747"/>
        <end position="767"/>
    </location>
</feature>
<feature type="topological domain" description="Chloroplast intermembrane" evidence="21">
    <location>
        <begin position="768"/>
        <end position="807"/>
    </location>
</feature>
<feature type="transmembrane region" description="Helical; Name=8" evidence="2">
    <location>
        <begin position="808"/>
        <end position="828"/>
    </location>
</feature>
<feature type="topological domain" description="Stromal" evidence="21">
    <location>
        <begin position="829"/>
        <end position="841"/>
    </location>
</feature>
<feature type="transmembrane region" description="Helical; Name=9" evidence="2">
    <location>
        <begin position="842"/>
        <end position="862"/>
    </location>
</feature>
<feature type="topological domain" description="Chloroplast intermembrane" evidence="21">
    <location>
        <begin position="863"/>
        <end position="865"/>
    </location>
</feature>
<feature type="transmembrane region" description="Helical; Name=10" evidence="2">
    <location>
        <begin position="866"/>
        <end position="886"/>
    </location>
</feature>
<feature type="topological domain" description="Stromal" evidence="21">
    <location>
        <begin position="887"/>
        <end position="898"/>
    </location>
</feature>
<feature type="transmembrane region" description="Helical; Name=11" evidence="2">
    <location>
        <begin position="899"/>
        <end position="919"/>
    </location>
</feature>
<feature type="topological domain" description="Chloroplast intermembrane" evidence="21">
    <location>
        <begin position="920"/>
        <end position="928"/>
    </location>
</feature>
<feature type="transmembrane region" description="Helical; Name=12" evidence="2">
    <location>
        <begin position="929"/>
        <end position="949"/>
    </location>
</feature>
<feature type="topological domain" description="Stromal" evidence="21">
    <location>
        <begin position="950"/>
        <end position="1174"/>
    </location>
</feature>
<feature type="domain" description="RCK N-terminal" evidence="3">
    <location>
        <begin position="975"/>
        <end position="1092"/>
    </location>
</feature>
<feature type="region of interest" description="Disordered" evidence="4">
    <location>
        <begin position="119"/>
        <end position="141"/>
    </location>
</feature>
<feature type="region of interest" description="Disordered" evidence="4">
    <location>
        <begin position="420"/>
        <end position="457"/>
    </location>
</feature>
<feature type="region of interest" description="Disordered" evidence="4">
    <location>
        <begin position="1141"/>
        <end position="1174"/>
    </location>
</feature>
<feature type="coiled-coil region" evidence="2">
    <location>
        <begin position="142"/>
        <end position="350"/>
    </location>
</feature>
<feature type="compositionally biased region" description="Basic and acidic residues" evidence="4">
    <location>
        <begin position="420"/>
        <end position="448"/>
    </location>
</feature>
<feature type="modified residue" description="N6-acetyllysine; by NSI" evidence="1">
    <location>
        <position position="170"/>
    </location>
</feature>
<feature type="mutagenesis site" description="Loss of activity." evidence="6">
    <original>D</original>
    <variation>A</variation>
    <location>
        <position position="721"/>
    </location>
</feature>
<feature type="mutagenesis site" description="Loss of activity." evidence="6">
    <original>E</original>
    <variation>K</variation>
    <location>
        <position position="833"/>
    </location>
</feature>
<comment type="function">
    <text evidence="6 7 9 10 12 14 15 16 17">Electroneutral K(+)/H(+) efflux antiporter modulating monovalent cation and pH homeostasis in plastids, especially during plastid division and thylakoid membrane formation (PubMed:22551943, PubMed:24278440, PubMed:27443603, PubMed:31296940, PubMed:33111995). Transports K(+) and Cs(+) preferentially relative to Na(+) or Li(+) (PubMed:22551943). May function in osmotic adjustment (PubMed:24278440). Collaboratively with KEA1, adjusts alkaline stromal pH upon light to dark transitions in plastids (PubMed:33111995). Together with KEA1, critical for chloroplast development, including chloroplast RNA-metabolism (e.g. rRNA maturation, polysome loading and RNA-protein interactions) and plastid gene expression (PGE), ion homeostasis, and photosynthesis (PubMed:27443603, PubMed:34235544). Contributes, during early seedling development, to the regulation of photosynthesis and abscisic acid- (ABA-) mediated primary root growth in a sucrose-dependent manner (PubMed:35193734). Involved in the regulation of reactive oxygen and nitrogen species (ROS and RNS) metabolism (PubMed:33485149). Required in roots for rapid hyperosmotic-induced Ca(2+) responses and for osmo-sensory potentiation in hyperosmotic conditions (PubMed:27528686). May counteract resilience to drought and salt stress, involving photorespiratory pathway and stomata closure (PubMed:33485149, PubMed:34235544).</text>
</comment>
<comment type="catalytic activity">
    <reaction evidence="7 12 14">
        <text>K(+)(in) + H(+)(out) = K(+)(out) + H(+)(in)</text>
        <dbReference type="Rhea" id="RHEA:29467"/>
        <dbReference type="ChEBI" id="CHEBI:15378"/>
        <dbReference type="ChEBI" id="CHEBI:29103"/>
    </reaction>
</comment>
<comment type="activity regulation">
    <text evidence="14">Repressed by sodium ions Na(+).</text>
</comment>
<comment type="biophysicochemical properties">
    <phDependence>
        <text evidence="7">Optimum pH is 5.8.</text>
    </phDependence>
</comment>
<comment type="subcellular location">
    <subcellularLocation>
        <location evidence="5 6 8 15">Plastid</location>
        <location evidence="5 6 8 15">Chloroplast inner membrane</location>
        <topology evidence="2">Multi-pass membrane protein</topology>
    </subcellularLocation>
    <subcellularLocation>
        <location evidence="15">Plastid inner membrane</location>
        <topology evidence="2">Multi-pass membrane protein</topology>
    </subcellularLocation>
    <text evidence="9 15">Specifically localized to the two caps of the dividing organelle separated by the fission plane (at protein level) (PubMed:27443603). Present both in photosynthetic chloroplasts of shoots and in non-photosynthetic plastids in roots (PubMed:33485149).</text>
</comment>
<comment type="alternative products">
    <event type="alternative splicing"/>
    <isoform>
        <id>O65272-1</id>
        <name>1</name>
        <sequence type="displayed"/>
    </isoform>
    <text>A number of isoforms are produced. According to EST sequences.</text>
</comment>
<comment type="tissue specificity">
    <text evidence="6 7 9 17">Detected in leaves, stems and flowers (PubMed:22551943). Expressed in shoots and roots (PubMed:24278440). Mainly localized to leaf veins, hypocotyls, mesophylls and guard cells (PubMed:35193734). Accumulates at high levels in small and dividing plastids (at protein level) (PubMed:27443603).</text>
</comment>
<comment type="induction">
    <text evidence="7">Up-regulated by osmotic stress and down-regulated by high K(+).</text>
</comment>
<comment type="PTM">
    <text evidence="11 13">Acetylated at Lys-170 by the stromal acetyltransferase enzyme NSI.</text>
</comment>
<comment type="disruption phenotype">
    <text evidence="8 9 10 14 15 16 17">No visible phenotype (PubMed:24794527). Disrupted K(+)/H(+) efflux antiporter in the kea1 kea2 double mutant (PubMed:33111995). Double mutants kea1 kea2 display strong growth retardation along with pale green leaves associated with a delayed formation of chloroplast pigments and electron transport complexes, as well as maturation defects of the plastid ribosomal RNAs and hampered RNA-protein interactions (PubMed:24794527, PubMed:27443603, PubMed:34235544). The double mutant kea1 kea2 exhibits a drastic photosystem II (PSII) quantum yield recovery under moderate salt stress (PubMed:34235544). Impaired rapid hyperosmotic-induced Ca(2+) responses in kea1 kea2 (PubMed:27528686). K(+)-induced alkalinization of plastid stroma is suppressed in kea1 kea2 mutants, as well as delayed rate of decay to neutral pH in the dark, but normal light-stimulated alkalinization of the stroma (PubMed:33111995). In addition, reduced primary root length is observed in the kea1 kea2 double mutant in the absence of sucrose, associated with lower abscisic acid (ABA) accumulation and impaired photosynthesis; these phenotypes are partially restored in the presence of moderate NaCl treatment (75 mM) (PubMed:33485149, PubMed:35193734). Plants kea1 kea2 have slightly higher K(+) levels and altered reactive oxygen and nitrogen species (ROS and RNS) metabolism, but enhanced resilience to drought stress due to an increased photorespiratory pathway and stomata closure (PubMed:33485149). Triple mutants kea1 kea2 kea3 are extremely stunted in size with entirely pale leaves and died before steeing seeds (PubMed:24794527).</text>
</comment>
<comment type="miscellaneous">
    <text evidence="6">The full-length protein being inactive in a heterologous system, the N-terminal region (58-556) seems to have a regulatory or auto-inhibitory function.</text>
</comment>
<comment type="similarity">
    <text evidence="20">Belongs to the monovalent cation:proton antiporter 2 (CPA2) transporter (TC 2.A.37) family. KEA (TC 2.A.37.1) subfamily.</text>
</comment>
<comment type="sequence caution" evidence="20">
    <conflict type="erroneous gene model prediction">
        <sequence resource="EMBL-CDS" id="AAC13619"/>
    </conflict>
    <text>Was originally thought to correspond to two different genes At4g00630 and At4g00640.</text>
</comment>
<comment type="sequence caution" evidence="20">
    <conflict type="erroneous gene model prediction">
        <sequence resource="EMBL-CDS" id="AAC13638"/>
    </conflict>
    <text>Was originally thought to correspond to two different genes At4g00630 and At4g00640.</text>
</comment>
<comment type="sequence caution" evidence="20">
    <conflict type="miscellaneous discrepancy">
        <sequence resource="EMBL" id="BX839410"/>
    </conflict>
    <text>Sequencing errors.</text>
</comment>
<comment type="sequence caution" evidence="20">
    <conflict type="erroneous gene model prediction">
        <sequence resource="EMBL-CDS" id="CAB80872"/>
    </conflict>
    <text>Was originally thought to correspond to two different genes At4g00630 and At4g00640.</text>
</comment>
<comment type="sequence caution" evidence="20">
    <conflict type="erroneous gene model prediction">
        <sequence resource="EMBL-CDS" id="CAB80873"/>
    </conflict>
    <text>Was originally thought to correspond to two different genes At4g00630 and At4g00640.</text>
</comment>
<evidence type="ECO:0000250" key="1">
    <source>
        <dbReference type="UniProtKB" id="Q9ZTZ7"/>
    </source>
</evidence>
<evidence type="ECO:0000255" key="2"/>
<evidence type="ECO:0000255" key="3">
    <source>
        <dbReference type="PROSITE-ProRule" id="PRU00543"/>
    </source>
</evidence>
<evidence type="ECO:0000256" key="4">
    <source>
        <dbReference type="SAM" id="MobiDB-lite"/>
    </source>
</evidence>
<evidence type="ECO:0000269" key="5">
    <source>
    </source>
</evidence>
<evidence type="ECO:0000269" key="6">
    <source>
    </source>
</evidence>
<evidence type="ECO:0000269" key="7">
    <source>
    </source>
</evidence>
<evidence type="ECO:0000269" key="8">
    <source>
    </source>
</evidence>
<evidence type="ECO:0000269" key="9">
    <source>
    </source>
</evidence>
<evidence type="ECO:0000269" key="10">
    <source>
    </source>
</evidence>
<evidence type="ECO:0000269" key="11">
    <source>
    </source>
</evidence>
<evidence type="ECO:0000269" key="12">
    <source>
    </source>
</evidence>
<evidence type="ECO:0000269" key="13">
    <source>
    </source>
</evidence>
<evidence type="ECO:0000269" key="14">
    <source>
    </source>
</evidence>
<evidence type="ECO:0000269" key="15">
    <source>
    </source>
</evidence>
<evidence type="ECO:0000269" key="16">
    <source>
    </source>
</evidence>
<evidence type="ECO:0000269" key="17">
    <source>
    </source>
</evidence>
<evidence type="ECO:0000303" key="18">
    <source>
    </source>
</evidence>
<evidence type="ECO:0000303" key="19">
    <source>
    </source>
</evidence>
<evidence type="ECO:0000305" key="20"/>
<evidence type="ECO:0000305" key="21">
    <source>
    </source>
</evidence>
<evidence type="ECO:0000312" key="22">
    <source>
        <dbReference type="Araport" id="AT4G00630"/>
    </source>
</evidence>
<evidence type="ECO:0000312" key="23">
    <source>
        <dbReference type="EMBL" id="AAC13619.1"/>
    </source>
</evidence>
<evidence type="ECO:0000312" key="24">
    <source>
        <dbReference type="EMBL" id="AAC13638.1"/>
    </source>
</evidence>